<accession>C4XK86</accession>
<organism>
    <name type="scientific">Solidesulfovibrio magneticus (strain ATCC 700980 / DSM 13731 / RS-1)</name>
    <name type="common">Desulfovibrio magneticus</name>
    <dbReference type="NCBI Taxonomy" id="573370"/>
    <lineage>
        <taxon>Bacteria</taxon>
        <taxon>Pseudomonadati</taxon>
        <taxon>Thermodesulfobacteriota</taxon>
        <taxon>Desulfovibrionia</taxon>
        <taxon>Desulfovibrionales</taxon>
        <taxon>Desulfovibrionaceae</taxon>
        <taxon>Solidesulfovibrio</taxon>
    </lineage>
</organism>
<keyword id="KW-0963">Cytoplasm</keyword>
<keyword id="KW-0489">Methyltransferase</keyword>
<keyword id="KW-0698">rRNA processing</keyword>
<keyword id="KW-0949">S-adenosyl-L-methionine</keyword>
<keyword id="KW-0808">Transferase</keyword>
<name>RSMH_SOLM1</name>
<sequence length="324" mass="35410">MEGQPIHKPVLLREVIELLGIRPGMKILDATVGLGGHSRGMLEAAGGEGQVLGLDRDREALSEAGRWLAPYGDRVRLVRTRSSRFPAVLAEAGWEKVDAALLDAGMSSLQLDDPERGFGFLHDGPLDMRMGAEDGGETAEGLVNLASYARLCEIIREYGEDPQAGRIARAIVSVREKEAITTTARLAEVVWQAYPAKWRATARQHPATRTFQALRMAVNEELAELEAFLKAIPDHLAPGGRVAVISFHSLEDRLVKRAFRAEATDCICPREQVVCVCGHRARLRILTKKPVMAGEEEVRDNSRARSAKLRVAERLPDAGADVAG</sequence>
<gene>
    <name evidence="1" type="primary">rsmH</name>
    <name type="synonym">mraW</name>
    <name type="ordered locus">DMR_33350</name>
</gene>
<comment type="function">
    <text evidence="1">Specifically methylates the N4 position of cytidine in position 1402 (C1402) of 16S rRNA.</text>
</comment>
<comment type="catalytic activity">
    <reaction evidence="1">
        <text>cytidine(1402) in 16S rRNA + S-adenosyl-L-methionine = N(4)-methylcytidine(1402) in 16S rRNA + S-adenosyl-L-homocysteine + H(+)</text>
        <dbReference type="Rhea" id="RHEA:42928"/>
        <dbReference type="Rhea" id="RHEA-COMP:10286"/>
        <dbReference type="Rhea" id="RHEA-COMP:10287"/>
        <dbReference type="ChEBI" id="CHEBI:15378"/>
        <dbReference type="ChEBI" id="CHEBI:57856"/>
        <dbReference type="ChEBI" id="CHEBI:59789"/>
        <dbReference type="ChEBI" id="CHEBI:74506"/>
        <dbReference type="ChEBI" id="CHEBI:82748"/>
        <dbReference type="EC" id="2.1.1.199"/>
    </reaction>
</comment>
<comment type="subcellular location">
    <subcellularLocation>
        <location evidence="1">Cytoplasm</location>
    </subcellularLocation>
</comment>
<comment type="similarity">
    <text evidence="1">Belongs to the methyltransferase superfamily. RsmH family.</text>
</comment>
<protein>
    <recommendedName>
        <fullName evidence="1">Ribosomal RNA small subunit methyltransferase H</fullName>
        <ecNumber evidence="1">2.1.1.199</ecNumber>
    </recommendedName>
    <alternativeName>
        <fullName evidence="1">16S rRNA m(4)C1402 methyltransferase</fullName>
    </alternativeName>
    <alternativeName>
        <fullName evidence="1">rRNA (cytosine-N(4)-)-methyltransferase RsmH</fullName>
    </alternativeName>
</protein>
<evidence type="ECO:0000255" key="1">
    <source>
        <dbReference type="HAMAP-Rule" id="MF_01007"/>
    </source>
</evidence>
<feature type="chain" id="PRO_0000386852" description="Ribosomal RNA small subunit methyltransferase H">
    <location>
        <begin position="1"/>
        <end position="324"/>
    </location>
</feature>
<feature type="binding site" evidence="1">
    <location>
        <begin position="35"/>
        <end position="37"/>
    </location>
    <ligand>
        <name>S-adenosyl-L-methionine</name>
        <dbReference type="ChEBI" id="CHEBI:59789"/>
    </ligand>
</feature>
<feature type="binding site" evidence="1">
    <location>
        <position position="55"/>
    </location>
    <ligand>
        <name>S-adenosyl-L-methionine</name>
        <dbReference type="ChEBI" id="CHEBI:59789"/>
    </ligand>
</feature>
<feature type="binding site" evidence="1">
    <location>
        <position position="85"/>
    </location>
    <ligand>
        <name>S-adenosyl-L-methionine</name>
        <dbReference type="ChEBI" id="CHEBI:59789"/>
    </ligand>
</feature>
<feature type="binding site" evidence="1">
    <location>
        <position position="103"/>
    </location>
    <ligand>
        <name>S-adenosyl-L-methionine</name>
        <dbReference type="ChEBI" id="CHEBI:59789"/>
    </ligand>
</feature>
<feature type="binding site" evidence="1">
    <location>
        <position position="110"/>
    </location>
    <ligand>
        <name>S-adenosyl-L-methionine</name>
        <dbReference type="ChEBI" id="CHEBI:59789"/>
    </ligand>
</feature>
<dbReference type="EC" id="2.1.1.199" evidence="1"/>
<dbReference type="EMBL" id="AP010904">
    <property type="protein sequence ID" value="BAH76826.1"/>
    <property type="molecule type" value="Genomic_DNA"/>
</dbReference>
<dbReference type="RefSeq" id="WP_015861976.1">
    <property type="nucleotide sequence ID" value="NC_012796.1"/>
</dbReference>
<dbReference type="SMR" id="C4XK86"/>
<dbReference type="STRING" id="573370.DMR_33350"/>
<dbReference type="KEGG" id="dma:DMR_33350"/>
<dbReference type="eggNOG" id="COG0275">
    <property type="taxonomic scope" value="Bacteria"/>
</dbReference>
<dbReference type="HOGENOM" id="CLU_038422_2_0_7"/>
<dbReference type="OrthoDB" id="9806637at2"/>
<dbReference type="Proteomes" id="UP000009071">
    <property type="component" value="Chromosome"/>
</dbReference>
<dbReference type="GO" id="GO:0005737">
    <property type="term" value="C:cytoplasm"/>
    <property type="evidence" value="ECO:0007669"/>
    <property type="project" value="UniProtKB-SubCell"/>
</dbReference>
<dbReference type="GO" id="GO:0071424">
    <property type="term" value="F:rRNA (cytosine-N4-)-methyltransferase activity"/>
    <property type="evidence" value="ECO:0007669"/>
    <property type="project" value="UniProtKB-UniRule"/>
</dbReference>
<dbReference type="GO" id="GO:0070475">
    <property type="term" value="P:rRNA base methylation"/>
    <property type="evidence" value="ECO:0007669"/>
    <property type="project" value="UniProtKB-UniRule"/>
</dbReference>
<dbReference type="Gene3D" id="1.10.150.170">
    <property type="entry name" value="Putative methyltransferase TM0872, insert domain"/>
    <property type="match status" value="1"/>
</dbReference>
<dbReference type="Gene3D" id="3.40.50.150">
    <property type="entry name" value="Vaccinia Virus protein VP39"/>
    <property type="match status" value="1"/>
</dbReference>
<dbReference type="HAMAP" id="MF_01007">
    <property type="entry name" value="16SrRNA_methyltr_H"/>
    <property type="match status" value="1"/>
</dbReference>
<dbReference type="InterPro" id="IPR002903">
    <property type="entry name" value="RsmH"/>
</dbReference>
<dbReference type="InterPro" id="IPR023397">
    <property type="entry name" value="SAM-dep_MeTrfase_MraW_recog"/>
</dbReference>
<dbReference type="InterPro" id="IPR029063">
    <property type="entry name" value="SAM-dependent_MTases_sf"/>
</dbReference>
<dbReference type="NCBIfam" id="TIGR00006">
    <property type="entry name" value="16S rRNA (cytosine(1402)-N(4))-methyltransferase RsmH"/>
    <property type="match status" value="1"/>
</dbReference>
<dbReference type="PANTHER" id="PTHR11265:SF0">
    <property type="entry name" value="12S RRNA N4-METHYLCYTIDINE METHYLTRANSFERASE"/>
    <property type="match status" value="1"/>
</dbReference>
<dbReference type="PANTHER" id="PTHR11265">
    <property type="entry name" value="S-ADENOSYL-METHYLTRANSFERASE MRAW"/>
    <property type="match status" value="1"/>
</dbReference>
<dbReference type="Pfam" id="PF01795">
    <property type="entry name" value="Methyltransf_5"/>
    <property type="match status" value="1"/>
</dbReference>
<dbReference type="PIRSF" id="PIRSF004486">
    <property type="entry name" value="MraW"/>
    <property type="match status" value="1"/>
</dbReference>
<dbReference type="SUPFAM" id="SSF81799">
    <property type="entry name" value="Putative methyltransferase TM0872, insert domain"/>
    <property type="match status" value="1"/>
</dbReference>
<dbReference type="SUPFAM" id="SSF53335">
    <property type="entry name" value="S-adenosyl-L-methionine-dependent methyltransferases"/>
    <property type="match status" value="1"/>
</dbReference>
<proteinExistence type="inferred from homology"/>
<reference key="1">
    <citation type="journal article" date="2009" name="Genome Res.">
        <title>Whole genome sequence of Desulfovibrio magneticus strain RS-1 revealed common gene clusters in magnetotactic bacteria.</title>
        <authorList>
            <person name="Nakazawa H."/>
            <person name="Arakaki A."/>
            <person name="Narita-Yamada S."/>
            <person name="Yashiro I."/>
            <person name="Jinno K."/>
            <person name="Aoki N."/>
            <person name="Tsuruyama A."/>
            <person name="Okamura Y."/>
            <person name="Tanikawa S."/>
            <person name="Fujita N."/>
            <person name="Takeyama H."/>
            <person name="Matsunaga T."/>
        </authorList>
    </citation>
    <scope>NUCLEOTIDE SEQUENCE [LARGE SCALE GENOMIC DNA]</scope>
    <source>
        <strain>ATCC 700980 / DSM 13731 / RS-1</strain>
    </source>
</reference>